<protein>
    <recommendedName>
        <fullName evidence="3 4">Alyteserin-1c</fullName>
    </recommendedName>
</protein>
<keyword id="KW-0002">3D-structure</keyword>
<keyword id="KW-0027">Amidation</keyword>
<keyword id="KW-0878">Amphibian defense peptide</keyword>
<keyword id="KW-0044">Antibiotic</keyword>
<keyword id="KW-0929">Antimicrobial</keyword>
<keyword id="KW-0903">Direct protein sequencing</keyword>
<keyword id="KW-0391">Immunity</keyword>
<keyword id="KW-0399">Innate immunity</keyword>
<keyword id="KW-0472">Membrane</keyword>
<keyword id="KW-0964">Secreted</keyword>
<keyword id="KW-1052">Target cell membrane</keyword>
<keyword id="KW-1053">Target membrane</keyword>
<dbReference type="PDB" id="2L5R">
    <property type="method" value="NMR"/>
    <property type="chains" value="A=1-23"/>
</dbReference>
<dbReference type="PDBsum" id="2L5R"/>
<dbReference type="SMR" id="H0USY4"/>
<dbReference type="GO" id="GO:0005576">
    <property type="term" value="C:extracellular region"/>
    <property type="evidence" value="ECO:0007669"/>
    <property type="project" value="UniProtKB-SubCell"/>
</dbReference>
<dbReference type="GO" id="GO:0016020">
    <property type="term" value="C:membrane"/>
    <property type="evidence" value="ECO:0007669"/>
    <property type="project" value="UniProtKB-KW"/>
</dbReference>
<dbReference type="GO" id="GO:0044218">
    <property type="term" value="C:other organism cell membrane"/>
    <property type="evidence" value="ECO:0007669"/>
    <property type="project" value="UniProtKB-KW"/>
</dbReference>
<dbReference type="GO" id="GO:0042742">
    <property type="term" value="P:defense response to bacterium"/>
    <property type="evidence" value="ECO:0007669"/>
    <property type="project" value="UniProtKB-KW"/>
</dbReference>
<dbReference type="GO" id="GO:0045087">
    <property type="term" value="P:innate immune response"/>
    <property type="evidence" value="ECO:0007669"/>
    <property type="project" value="UniProtKB-KW"/>
</dbReference>
<reference key="1">
    <citation type="journal article" date="2009" name="Peptides">
        <title>The alyteserins: two families of antimicrobial peptides from the skin secretions of the midwife toad Alytes obstetricans (Alytidae).</title>
        <authorList>
            <person name="Conlon J.M."/>
            <person name="Demandt A."/>
            <person name="Nielsen P.F."/>
            <person name="Leprince J."/>
            <person name="Vaudry H."/>
            <person name="Woodhams D.C."/>
        </authorList>
    </citation>
    <scope>PROTEIN SEQUENCE</scope>
    <scope>FUNCTION</scope>
    <scope>SUBCELLULAR LOCATION</scope>
    <scope>AMIDATION AT SER-23</scope>
    <scope>MASS SPECTROMETRY</scope>
    <source>
        <tissue>Skin secretion</tissue>
    </source>
</reference>
<reference evidence="8" key="2">
    <citation type="journal article" date="2011" name="Biochim. Biophys. Acta">
        <title>Conformational and membrane interaction studies of the antimicrobial peptide alyteserin-1c and its analogue [E4K]alyteserin-1c.</title>
        <authorList>
            <person name="Subasinghage A.P."/>
            <person name="O'Flynn D."/>
            <person name="Conlon J.M."/>
            <person name="Hewage C.M."/>
        </authorList>
    </citation>
    <scope>STRUCTURE BY NMR</scope>
    <scope>FUNCTION</scope>
    <scope>SYNTHESIS</scope>
    <scope>AMIDATION AT SER-23</scope>
    <scope>MUTAGENESIS OF GLU-4</scope>
</reference>
<accession>H0USY4</accession>
<evidence type="ECO:0000269" key="1">
    <source>
    </source>
</evidence>
<evidence type="ECO:0000269" key="2">
    <source>
    </source>
</evidence>
<evidence type="ECO:0000303" key="3">
    <source>
    </source>
</evidence>
<evidence type="ECO:0000303" key="4">
    <source>
    </source>
</evidence>
<evidence type="ECO:0000305" key="5"/>
<evidence type="ECO:0000305" key="6">
    <source>
    </source>
</evidence>
<evidence type="ECO:0000305" key="7">
    <source>
    </source>
</evidence>
<evidence type="ECO:0000312" key="8">
    <source>
        <dbReference type="PDB" id="2L5R"/>
    </source>
</evidence>
<evidence type="ECO:0007829" key="9">
    <source>
        <dbReference type="PDB" id="2L5R"/>
    </source>
</evidence>
<sequence length="23" mass="2267">GLKEIFKAGLGSLVKGIAAHVAS</sequence>
<proteinExistence type="evidence at protein level"/>
<organism>
    <name type="scientific">Alytes obstetricans</name>
    <name type="common">Common midwife toad</name>
    <name type="synonym">Bufo obstetricans</name>
    <dbReference type="NCBI Taxonomy" id="8443"/>
    <lineage>
        <taxon>Eukaryota</taxon>
        <taxon>Metazoa</taxon>
        <taxon>Chordata</taxon>
        <taxon>Craniata</taxon>
        <taxon>Vertebrata</taxon>
        <taxon>Euteleostomi</taxon>
        <taxon>Amphibia</taxon>
        <taxon>Batrachia</taxon>
        <taxon>Anura</taxon>
        <taxon>Alytidae</taxon>
        <taxon>Alytinae</taxon>
        <taxon>Alytes</taxon>
    </lineage>
</organism>
<name>ATI1C_ALYOB</name>
<feature type="peptide" id="PRO_0000457132" description="Alyteserin-1c" evidence="2">
    <location>
        <begin position="1"/>
        <end position="23"/>
    </location>
</feature>
<feature type="modified residue" description="Serine amide" evidence="2">
    <location>
        <position position="23"/>
    </location>
</feature>
<feature type="mutagenesis site" description="Increase in growth-inhibitory potency against Gram-negative bacteria and decrease in hemolytic activity. No change in growth-inhibitory potency against Gram-positive bacteria." evidence="2">
    <original>E</original>
    <variation>K</variation>
    <location>
        <position position="4"/>
    </location>
</feature>
<feature type="helix" evidence="9">
    <location>
        <begin position="2"/>
        <end position="21"/>
    </location>
</feature>
<comment type="function">
    <text evidence="1 2">Antibacterial peptide with amphipathic alpha-helical structure that shows selective growth-inhibitory activity against Gram-negative bacteria but low hemolytic activity against human erythrocytes (LC(50)=145-220 uM) (PubMed:19463738, PubMed:21565166). It is moderately active against the Gram-negative bacteria E.coli (MIC=25 uM), K.pneumoniae (MIC=50 uM), P.aeruginosa (MIC=25 uM), A.baumannii (MIC=6 uM), and is weaky active against the Gram-positive S.aureus (MIC=100-250 uM) (PubMed:19463738, PubMed:21565166).</text>
</comment>
<comment type="subcellular location">
    <subcellularLocation>
        <location evidence="1">Secreted</location>
    </subcellularLocation>
    <subcellularLocation>
        <location evidence="7">Target cell membrane</location>
    </subcellularLocation>
    <text evidence="7">About the first 18 N-terminal residues of the peptide inserts into the lipid bilayer.</text>
</comment>
<comment type="tissue specificity">
    <text evidence="6">Expressed by the skin glands.</text>
</comment>
<comment type="mass spectrometry" mass="2263.5" method="MALDI" evidence="1"/>
<comment type="similarity">
    <text evidence="5">Belongs to the frog skin active peptide (FSAP) family. Alyteserin-1 subfamily.</text>
</comment>